<organism>
    <name type="scientific">Sus scrofa</name>
    <name type="common">Pig</name>
    <dbReference type="NCBI Taxonomy" id="9823"/>
    <lineage>
        <taxon>Eukaryota</taxon>
        <taxon>Metazoa</taxon>
        <taxon>Chordata</taxon>
        <taxon>Craniata</taxon>
        <taxon>Vertebrata</taxon>
        <taxon>Euteleostomi</taxon>
        <taxon>Mammalia</taxon>
        <taxon>Eutheria</taxon>
        <taxon>Laurasiatheria</taxon>
        <taxon>Artiodactyla</taxon>
        <taxon>Suina</taxon>
        <taxon>Suidae</taxon>
        <taxon>Sus</taxon>
    </lineage>
</organism>
<sequence length="322" mass="35614">MQAGSWVVGGGDSDSRVLSIQSHVVRGYVGNRAATFPLQVLGFEVDAVNSVQFSNHTGYAHWKGQVLNSDELHALYEGLKLNNVNQYDYVLTGYTRDKSFLAMVVDIVRELKQQNPRLVYVCDPVMGDKWDGEGSMYVPEDLLPVYREKVVPVADIITPNQFEAELLTGRRIHSEEEALAVMDMLHAMGPDTVVITSSDLPSPRGKDYLIALGSQRTRSPDGSVATQRIRMEICKVDAVFVGTGDLFAAMLLAWTHKHPNNLKVACEKTVSAMHHVLRRTIQCAKAKAGEGLKPSPAQLELRMVQSKRDIEDPEVVVQATVL</sequence>
<accession>O46560</accession>
<name>PDXK_PIG</name>
<proteinExistence type="evidence at protein level"/>
<keyword id="KW-0007">Acetylation</keyword>
<keyword id="KW-0067">ATP-binding</keyword>
<keyword id="KW-0963">Cytoplasm</keyword>
<keyword id="KW-0903">Direct protein sequencing</keyword>
<keyword id="KW-0418">Kinase</keyword>
<keyword id="KW-0460">Magnesium</keyword>
<keyword id="KW-0479">Metal-binding</keyword>
<keyword id="KW-0547">Nucleotide-binding</keyword>
<keyword id="KW-0597">Phosphoprotein</keyword>
<keyword id="KW-1185">Reference proteome</keyword>
<keyword id="KW-0915">Sodium</keyword>
<keyword id="KW-0808">Transferase</keyword>
<keyword id="KW-0862">Zinc</keyword>
<feature type="chain" id="PRO_0000213337" description="Pyridoxal kinase">
    <location>
        <begin position="1"/>
        <end position="322"/>
    </location>
</feature>
<feature type="active site" description="Proton acceptor" evidence="1">
    <location>
        <position position="245"/>
    </location>
</feature>
<feature type="binding site" evidence="1">
    <location>
        <position position="22"/>
    </location>
    <ligand>
        <name>pyridoxal</name>
        <dbReference type="ChEBI" id="CHEBI:17310"/>
    </ligand>
</feature>
<feature type="binding site" evidence="1">
    <location>
        <position position="57"/>
    </location>
    <ligand>
        <name>pyridoxal</name>
        <dbReference type="ChEBI" id="CHEBI:17310"/>
    </ligand>
</feature>
<feature type="binding site" evidence="1">
    <location>
        <position position="57"/>
    </location>
    <ligand>
        <name>pyridoxal 5'-phosphate</name>
        <dbReference type="ChEBI" id="CHEBI:597326"/>
    </ligand>
</feature>
<feature type="binding site" evidence="1">
    <location>
        <position position="123"/>
    </location>
    <ligand>
        <name>ATP</name>
        <dbReference type="ChEBI" id="CHEBI:30616"/>
    </ligand>
</feature>
<feature type="binding site" evidence="1">
    <location>
        <position position="123"/>
    </location>
    <ligand>
        <name>Na(+)</name>
        <dbReference type="ChEBI" id="CHEBI:29101"/>
    </ligand>
</feature>
<feature type="binding site" evidence="1">
    <location>
        <position position="128"/>
    </location>
    <ligand>
        <name>Mg(2+)</name>
        <dbReference type="ChEBI" id="CHEBI:18420"/>
    </ligand>
</feature>
<feature type="binding site" evidence="1">
    <location>
        <position position="158"/>
    </location>
    <ligand>
        <name>Na(+)</name>
        <dbReference type="ChEBI" id="CHEBI:29101"/>
    </ligand>
</feature>
<feature type="binding site" evidence="1">
    <location>
        <begin position="160"/>
        <end position="163"/>
    </location>
    <ligand>
        <name>ATP</name>
        <dbReference type="ChEBI" id="CHEBI:30616"/>
    </ligand>
</feature>
<feature type="binding site" evidence="1">
    <location>
        <begin position="196"/>
        <end position="197"/>
    </location>
    <ligand>
        <name>ATP</name>
        <dbReference type="ChEBI" id="CHEBI:30616"/>
    </ligand>
</feature>
<feature type="binding site" evidence="1">
    <location>
        <position position="196"/>
    </location>
    <ligand>
        <name>Na(+)</name>
        <dbReference type="ChEBI" id="CHEBI:29101"/>
    </ligand>
</feature>
<feature type="binding site" evidence="1">
    <location>
        <begin position="236"/>
        <end position="238"/>
    </location>
    <ligand>
        <name>ATP</name>
        <dbReference type="ChEBI" id="CHEBI:30616"/>
    </ligand>
</feature>
<feature type="binding site" evidence="1">
    <location>
        <position position="243"/>
    </location>
    <ligand>
        <name>ATP</name>
        <dbReference type="ChEBI" id="CHEBI:30616"/>
    </ligand>
</feature>
<feature type="binding site" evidence="1">
    <location>
        <begin position="244"/>
        <end position="245"/>
    </location>
    <ligand>
        <name>pyridoxal 5'-phosphate</name>
        <dbReference type="ChEBI" id="CHEBI:597326"/>
    </ligand>
</feature>
<feature type="modified residue" description="N-acetylmethionine" evidence="2">
    <location>
        <position position="1"/>
    </location>
</feature>
<feature type="modified residue" description="Phosphoserine" evidence="1">
    <location>
        <position position="69"/>
    </location>
</feature>
<feature type="modified residue" description="Phosphoserine" evidence="1">
    <location>
        <position position="174"/>
    </location>
</feature>
<feature type="modified residue" description="Phosphoserine" evidence="1">
    <location>
        <position position="223"/>
    </location>
</feature>
<feature type="modified residue" description="Phosphoserine" evidence="1">
    <location>
        <position position="295"/>
    </location>
</feature>
<reference key="1">
    <citation type="journal article" date="1998" name="Int. J. Biochem. Cell Biol.">
        <title>Porcine pyridoxal kinase c-DNA cloning, expression and confirmation of its primary sequence.</title>
        <authorList>
            <person name="Gao Z.G."/>
            <person name="Lau C.-K."/>
            <person name="Lo S.C.L."/>
            <person name="Choi S.Y."/>
            <person name="Churchich J.E."/>
            <person name="Kwok F."/>
        </authorList>
    </citation>
    <scope>NUCLEOTIDE SEQUENCE [MRNA]</scope>
    <scope>FUNCTION</scope>
    <scope>CATALYTIC ACTIVITY</scope>
    <scope>COFACTOR</scope>
    <scope>PROTEIN SEQUENCE OF 17-322</scope>
    <source>
        <tissue>Brain cortex</tissue>
    </source>
</reference>
<dbReference type="EC" id="2.7.1.35" evidence="3"/>
<dbReference type="EMBL" id="AF041255">
    <property type="protein sequence ID" value="AAB96794.1"/>
    <property type="molecule type" value="mRNA"/>
</dbReference>
<dbReference type="RefSeq" id="NP_999108.1">
    <property type="nucleotide sequence ID" value="NM_213943.1"/>
</dbReference>
<dbReference type="SMR" id="O46560"/>
<dbReference type="FunCoup" id="O46560">
    <property type="interactions" value="1277"/>
</dbReference>
<dbReference type="STRING" id="9823.ENSSSCP00000031364"/>
<dbReference type="PaxDb" id="9823-ENSSSCP00000028021"/>
<dbReference type="PeptideAtlas" id="O46560"/>
<dbReference type="GeneID" id="396983"/>
<dbReference type="KEGG" id="ssc:396983"/>
<dbReference type="CTD" id="8566"/>
<dbReference type="eggNOG" id="KOG2599">
    <property type="taxonomic scope" value="Eukaryota"/>
</dbReference>
<dbReference type="InParanoid" id="O46560"/>
<dbReference type="OrthoDB" id="2104723at2759"/>
<dbReference type="UniPathway" id="UPA01068">
    <property type="reaction ID" value="UER00298"/>
</dbReference>
<dbReference type="UniPathway" id="UPA01068">
    <property type="reaction ID" value="UER00299"/>
</dbReference>
<dbReference type="UniPathway" id="UPA01068">
    <property type="reaction ID" value="UER00300"/>
</dbReference>
<dbReference type="Proteomes" id="UP000008227">
    <property type="component" value="Unplaced"/>
</dbReference>
<dbReference type="Proteomes" id="UP000314985">
    <property type="component" value="Unplaced"/>
</dbReference>
<dbReference type="Proteomes" id="UP000694570">
    <property type="component" value="Unplaced"/>
</dbReference>
<dbReference type="Proteomes" id="UP000694571">
    <property type="component" value="Unplaced"/>
</dbReference>
<dbReference type="Proteomes" id="UP000694720">
    <property type="component" value="Unplaced"/>
</dbReference>
<dbReference type="Proteomes" id="UP000694722">
    <property type="component" value="Unplaced"/>
</dbReference>
<dbReference type="Proteomes" id="UP000694723">
    <property type="component" value="Unplaced"/>
</dbReference>
<dbReference type="Proteomes" id="UP000694724">
    <property type="component" value="Unplaced"/>
</dbReference>
<dbReference type="Proteomes" id="UP000694725">
    <property type="component" value="Unplaced"/>
</dbReference>
<dbReference type="Proteomes" id="UP000694726">
    <property type="component" value="Unplaced"/>
</dbReference>
<dbReference type="Proteomes" id="UP000694727">
    <property type="component" value="Unplaced"/>
</dbReference>
<dbReference type="Proteomes" id="UP000694728">
    <property type="component" value="Unplaced"/>
</dbReference>
<dbReference type="GO" id="GO:0005829">
    <property type="term" value="C:cytosol"/>
    <property type="evidence" value="ECO:0000318"/>
    <property type="project" value="GO_Central"/>
</dbReference>
<dbReference type="GO" id="GO:0005524">
    <property type="term" value="F:ATP binding"/>
    <property type="evidence" value="ECO:0007669"/>
    <property type="project" value="UniProtKB-KW"/>
</dbReference>
<dbReference type="GO" id="GO:0046872">
    <property type="term" value="F:metal ion binding"/>
    <property type="evidence" value="ECO:0007669"/>
    <property type="project" value="UniProtKB-KW"/>
</dbReference>
<dbReference type="GO" id="GO:0008478">
    <property type="term" value="F:pyridoxal kinase activity"/>
    <property type="evidence" value="ECO:0000318"/>
    <property type="project" value="GO_Central"/>
</dbReference>
<dbReference type="GO" id="GO:0009443">
    <property type="term" value="P:pyridoxal 5'-phosphate salvage"/>
    <property type="evidence" value="ECO:0000318"/>
    <property type="project" value="GO_Central"/>
</dbReference>
<dbReference type="CDD" id="cd01173">
    <property type="entry name" value="pyridoxal_pyridoxamine_kinase"/>
    <property type="match status" value="1"/>
</dbReference>
<dbReference type="FunFam" id="3.40.1190.20:FF:000007">
    <property type="entry name" value="Pyridoxal kinase"/>
    <property type="match status" value="1"/>
</dbReference>
<dbReference type="Gene3D" id="3.40.1190.20">
    <property type="match status" value="1"/>
</dbReference>
<dbReference type="InterPro" id="IPR013749">
    <property type="entry name" value="PM/HMP-P_kinase-1"/>
</dbReference>
<dbReference type="InterPro" id="IPR004625">
    <property type="entry name" value="PyrdxlKinase"/>
</dbReference>
<dbReference type="InterPro" id="IPR029056">
    <property type="entry name" value="Ribokinase-like"/>
</dbReference>
<dbReference type="NCBIfam" id="TIGR00687">
    <property type="entry name" value="pyridox_kin"/>
    <property type="match status" value="1"/>
</dbReference>
<dbReference type="PANTHER" id="PTHR10534">
    <property type="entry name" value="PYRIDOXAL KINASE"/>
    <property type="match status" value="1"/>
</dbReference>
<dbReference type="PANTHER" id="PTHR10534:SF2">
    <property type="entry name" value="PYRIDOXAL KINASE"/>
    <property type="match status" value="1"/>
</dbReference>
<dbReference type="Pfam" id="PF08543">
    <property type="entry name" value="Phos_pyr_kin"/>
    <property type="match status" value="1"/>
</dbReference>
<dbReference type="SUPFAM" id="SSF53613">
    <property type="entry name" value="Ribokinase-like"/>
    <property type="match status" value="1"/>
</dbReference>
<evidence type="ECO:0000250" key="1">
    <source>
        <dbReference type="UniProtKB" id="O00764"/>
    </source>
</evidence>
<evidence type="ECO:0000250" key="2">
    <source>
        <dbReference type="UniProtKB" id="P82197"/>
    </source>
</evidence>
<evidence type="ECO:0000269" key="3">
    <source>
    </source>
</evidence>
<evidence type="ECO:0000305" key="4"/>
<evidence type="ECO:0000305" key="5">
    <source>
    </source>
</evidence>
<protein>
    <recommendedName>
        <fullName>Pyridoxal kinase</fullName>
        <ecNumber evidence="3">2.7.1.35</ecNumber>
    </recommendedName>
    <alternativeName>
        <fullName>Pyridoxine kinase</fullName>
    </alternativeName>
</protein>
<comment type="function">
    <text evidence="1 3 4">Catalyzes the phosphorylation of the dietary vitamin B6 vitamers pyridoxal (PL), pyridoxine (PN) and pyridoxamine (PM) to form pyridoxal 5'-phosphate (PLP), pyridoxine 5'-phosphate (PNP) and pyridoxamine 5'-phosphate (PMP), respectively (Probable) (PubMed:9924807). PLP is the active form of vitamin B6, and acts as a cofactor for over 140 different enzymatic reactions (By similarity).</text>
</comment>
<comment type="catalytic activity">
    <reaction evidence="3">
        <text>pyridoxal + ATP = pyridoxal 5'-phosphate + ADP + H(+)</text>
        <dbReference type="Rhea" id="RHEA:10224"/>
        <dbReference type="ChEBI" id="CHEBI:15378"/>
        <dbReference type="ChEBI" id="CHEBI:17310"/>
        <dbReference type="ChEBI" id="CHEBI:30616"/>
        <dbReference type="ChEBI" id="CHEBI:456216"/>
        <dbReference type="ChEBI" id="CHEBI:597326"/>
        <dbReference type="EC" id="2.7.1.35"/>
    </reaction>
    <physiologicalReaction direction="left-to-right" evidence="5">
        <dbReference type="Rhea" id="RHEA:10225"/>
    </physiologicalReaction>
</comment>
<comment type="catalytic activity">
    <reaction evidence="1">
        <text>pyridoxamine + ATP = pyridoxamine 5'-phosphate + ADP + H(+)</text>
        <dbReference type="Rhea" id="RHEA:25104"/>
        <dbReference type="ChEBI" id="CHEBI:15378"/>
        <dbReference type="ChEBI" id="CHEBI:30616"/>
        <dbReference type="ChEBI" id="CHEBI:57761"/>
        <dbReference type="ChEBI" id="CHEBI:58451"/>
        <dbReference type="ChEBI" id="CHEBI:456216"/>
        <dbReference type="EC" id="2.7.1.35"/>
    </reaction>
    <physiologicalReaction direction="left-to-right" evidence="1">
        <dbReference type="Rhea" id="RHEA:25105"/>
    </physiologicalReaction>
</comment>
<comment type="catalytic activity">
    <reaction evidence="1">
        <text>pyridoxine + ATP = pyridoxine 5'-phosphate + ADP + H(+)</text>
        <dbReference type="Rhea" id="RHEA:25108"/>
        <dbReference type="ChEBI" id="CHEBI:15378"/>
        <dbReference type="ChEBI" id="CHEBI:16709"/>
        <dbReference type="ChEBI" id="CHEBI:30616"/>
        <dbReference type="ChEBI" id="CHEBI:58589"/>
        <dbReference type="ChEBI" id="CHEBI:456216"/>
        <dbReference type="EC" id="2.7.1.35"/>
    </reaction>
    <physiologicalReaction direction="left-to-right" evidence="1">
        <dbReference type="Rhea" id="RHEA:25109"/>
    </physiologicalReaction>
</comment>
<comment type="cofactor">
    <cofactor evidence="3">
        <name>Zn(2+)</name>
        <dbReference type="ChEBI" id="CHEBI:29105"/>
    </cofactor>
    <cofactor evidence="3">
        <name>Mg(2+)</name>
        <dbReference type="ChEBI" id="CHEBI:18420"/>
    </cofactor>
    <text evidence="3">Divalent metal cations. Zn(2+) is more efficient than Mg(2+).</text>
</comment>
<comment type="activity regulation">
    <text evidence="1">Activity is increased in the presence of K(+)or Na(+).</text>
</comment>
<comment type="pathway">
    <text evidence="1">Cofactor metabolism; pyridoxal 5'-phosphate salvage; pyridoxal 5'-phosphate from pyridoxal: step 1/1.</text>
</comment>
<comment type="pathway">
    <text evidence="1">Cofactor metabolism; pyridoxal 5'-phosphate salvage; pyridoxine 5'-phosphate from pyridoxine: step 1/1.</text>
</comment>
<comment type="pathway">
    <text evidence="1">Cofactor metabolism; pyridoxal 5'-phosphate salvage; pyridoxamine 5'-phosphate from pyridoxamine: step 1/1.</text>
</comment>
<comment type="subunit">
    <text evidence="1">Homodimer.</text>
</comment>
<comment type="subcellular location">
    <subcellularLocation>
        <location evidence="1">Cytoplasm</location>
        <location evidence="1">Cytosol</location>
    </subcellularLocation>
</comment>
<comment type="PTM">
    <text>The N-terminus is blocked.</text>
</comment>
<comment type="similarity">
    <text evidence="4">Belongs to the pyridoxine kinase family.</text>
</comment>
<gene>
    <name type="primary">PDXK</name>
    <name type="synonym">PKH</name>
</gene>